<comment type="function">
    <text evidence="1">Catalyzes the ATP-dependent amination of UTP to CTP with either L-glutamine or ammonia as the source of nitrogen. Regulates intracellular CTP levels through interactions with the four ribonucleotide triphosphates.</text>
</comment>
<comment type="catalytic activity">
    <reaction evidence="1">
        <text>UTP + L-glutamine + ATP + H2O = CTP + L-glutamate + ADP + phosphate + 2 H(+)</text>
        <dbReference type="Rhea" id="RHEA:26426"/>
        <dbReference type="ChEBI" id="CHEBI:15377"/>
        <dbReference type="ChEBI" id="CHEBI:15378"/>
        <dbReference type="ChEBI" id="CHEBI:29985"/>
        <dbReference type="ChEBI" id="CHEBI:30616"/>
        <dbReference type="ChEBI" id="CHEBI:37563"/>
        <dbReference type="ChEBI" id="CHEBI:43474"/>
        <dbReference type="ChEBI" id="CHEBI:46398"/>
        <dbReference type="ChEBI" id="CHEBI:58359"/>
        <dbReference type="ChEBI" id="CHEBI:456216"/>
        <dbReference type="EC" id="6.3.4.2"/>
    </reaction>
</comment>
<comment type="catalytic activity">
    <reaction evidence="1">
        <text>L-glutamine + H2O = L-glutamate + NH4(+)</text>
        <dbReference type="Rhea" id="RHEA:15889"/>
        <dbReference type="ChEBI" id="CHEBI:15377"/>
        <dbReference type="ChEBI" id="CHEBI:28938"/>
        <dbReference type="ChEBI" id="CHEBI:29985"/>
        <dbReference type="ChEBI" id="CHEBI:58359"/>
    </reaction>
</comment>
<comment type="catalytic activity">
    <reaction evidence="1">
        <text>UTP + NH4(+) + ATP = CTP + ADP + phosphate + 2 H(+)</text>
        <dbReference type="Rhea" id="RHEA:16597"/>
        <dbReference type="ChEBI" id="CHEBI:15378"/>
        <dbReference type="ChEBI" id="CHEBI:28938"/>
        <dbReference type="ChEBI" id="CHEBI:30616"/>
        <dbReference type="ChEBI" id="CHEBI:37563"/>
        <dbReference type="ChEBI" id="CHEBI:43474"/>
        <dbReference type="ChEBI" id="CHEBI:46398"/>
        <dbReference type="ChEBI" id="CHEBI:456216"/>
    </reaction>
</comment>
<comment type="activity regulation">
    <text evidence="1">Allosterically activated by GTP, when glutamine is the substrate; GTP has no effect on the reaction when ammonia is the substrate. The allosteric effector GTP functions by stabilizing the protein conformation that binds the tetrahedral intermediate(s) formed during glutamine hydrolysis. Inhibited by the product CTP, via allosteric rather than competitive inhibition.</text>
</comment>
<comment type="pathway">
    <text evidence="1">Pyrimidine metabolism; CTP biosynthesis via de novo pathway; CTP from UDP: step 2/2.</text>
</comment>
<comment type="subunit">
    <text evidence="1">Homotetramer.</text>
</comment>
<comment type="miscellaneous">
    <text evidence="1">CTPSs have evolved a hybrid strategy for distinguishing between UTP and CTP. The overlapping regions of the product feedback inhibitory and substrate sites recognize a common feature in both compounds, the triphosphate moiety. To differentiate isosteric substrate and product pyrimidine rings, an additional pocket far from the expected kinase/ligase catalytic site, specifically recognizes the cytosine and ribose portions of the product inhibitor.</text>
</comment>
<comment type="similarity">
    <text evidence="1">Belongs to the CTP synthase family.</text>
</comment>
<protein>
    <recommendedName>
        <fullName evidence="1">CTP synthase</fullName>
        <ecNumber evidence="1">6.3.4.2</ecNumber>
    </recommendedName>
    <alternativeName>
        <fullName evidence="1">Cytidine 5'-triphosphate synthase</fullName>
    </alternativeName>
    <alternativeName>
        <fullName evidence="1">Cytidine triphosphate synthetase</fullName>
        <shortName evidence="1">CTP synthetase</shortName>
        <shortName evidence="1">CTPS</shortName>
    </alternativeName>
    <alternativeName>
        <fullName evidence="1">UTP--ammonia ligase</fullName>
    </alternativeName>
</protein>
<name>PYRG_ACTP7</name>
<dbReference type="EC" id="6.3.4.2" evidence="1"/>
<dbReference type="EMBL" id="CP001091">
    <property type="protein sequence ID" value="ACE60790.1"/>
    <property type="molecule type" value="Genomic_DNA"/>
</dbReference>
<dbReference type="RefSeq" id="WP_005595836.1">
    <property type="nucleotide sequence ID" value="NC_010939.1"/>
</dbReference>
<dbReference type="SMR" id="B3GZX8"/>
<dbReference type="MEROPS" id="C26.964"/>
<dbReference type="GeneID" id="48598283"/>
<dbReference type="KEGG" id="apa:APP7_0138"/>
<dbReference type="HOGENOM" id="CLU_011675_5_0_6"/>
<dbReference type="UniPathway" id="UPA00159">
    <property type="reaction ID" value="UER00277"/>
</dbReference>
<dbReference type="Proteomes" id="UP000001226">
    <property type="component" value="Chromosome"/>
</dbReference>
<dbReference type="GO" id="GO:0005829">
    <property type="term" value="C:cytosol"/>
    <property type="evidence" value="ECO:0007669"/>
    <property type="project" value="TreeGrafter"/>
</dbReference>
<dbReference type="GO" id="GO:0005524">
    <property type="term" value="F:ATP binding"/>
    <property type="evidence" value="ECO:0007669"/>
    <property type="project" value="UniProtKB-KW"/>
</dbReference>
<dbReference type="GO" id="GO:0003883">
    <property type="term" value="F:CTP synthase activity"/>
    <property type="evidence" value="ECO:0007669"/>
    <property type="project" value="UniProtKB-UniRule"/>
</dbReference>
<dbReference type="GO" id="GO:0004359">
    <property type="term" value="F:glutaminase activity"/>
    <property type="evidence" value="ECO:0007669"/>
    <property type="project" value="RHEA"/>
</dbReference>
<dbReference type="GO" id="GO:0042802">
    <property type="term" value="F:identical protein binding"/>
    <property type="evidence" value="ECO:0007669"/>
    <property type="project" value="TreeGrafter"/>
</dbReference>
<dbReference type="GO" id="GO:0046872">
    <property type="term" value="F:metal ion binding"/>
    <property type="evidence" value="ECO:0007669"/>
    <property type="project" value="UniProtKB-KW"/>
</dbReference>
<dbReference type="GO" id="GO:0044210">
    <property type="term" value="P:'de novo' CTP biosynthetic process"/>
    <property type="evidence" value="ECO:0007669"/>
    <property type="project" value="UniProtKB-UniRule"/>
</dbReference>
<dbReference type="GO" id="GO:0019856">
    <property type="term" value="P:pyrimidine nucleobase biosynthetic process"/>
    <property type="evidence" value="ECO:0007669"/>
    <property type="project" value="TreeGrafter"/>
</dbReference>
<dbReference type="CDD" id="cd03113">
    <property type="entry name" value="CTPS_N"/>
    <property type="match status" value="1"/>
</dbReference>
<dbReference type="CDD" id="cd01746">
    <property type="entry name" value="GATase1_CTP_Synthase"/>
    <property type="match status" value="1"/>
</dbReference>
<dbReference type="FunFam" id="3.40.50.300:FF:000009">
    <property type="entry name" value="CTP synthase"/>
    <property type="match status" value="1"/>
</dbReference>
<dbReference type="FunFam" id="3.40.50.880:FF:000002">
    <property type="entry name" value="CTP synthase"/>
    <property type="match status" value="1"/>
</dbReference>
<dbReference type="Gene3D" id="3.40.50.880">
    <property type="match status" value="1"/>
</dbReference>
<dbReference type="Gene3D" id="3.40.50.300">
    <property type="entry name" value="P-loop containing nucleotide triphosphate hydrolases"/>
    <property type="match status" value="1"/>
</dbReference>
<dbReference type="HAMAP" id="MF_01227">
    <property type="entry name" value="PyrG"/>
    <property type="match status" value="1"/>
</dbReference>
<dbReference type="InterPro" id="IPR029062">
    <property type="entry name" value="Class_I_gatase-like"/>
</dbReference>
<dbReference type="InterPro" id="IPR004468">
    <property type="entry name" value="CTP_synthase"/>
</dbReference>
<dbReference type="InterPro" id="IPR017456">
    <property type="entry name" value="CTP_synthase_N"/>
</dbReference>
<dbReference type="InterPro" id="IPR017926">
    <property type="entry name" value="GATASE"/>
</dbReference>
<dbReference type="InterPro" id="IPR033828">
    <property type="entry name" value="GATase1_CTP_Synthase"/>
</dbReference>
<dbReference type="InterPro" id="IPR027417">
    <property type="entry name" value="P-loop_NTPase"/>
</dbReference>
<dbReference type="NCBIfam" id="NF003792">
    <property type="entry name" value="PRK05380.1"/>
    <property type="match status" value="1"/>
</dbReference>
<dbReference type="NCBIfam" id="TIGR00337">
    <property type="entry name" value="PyrG"/>
    <property type="match status" value="1"/>
</dbReference>
<dbReference type="PANTHER" id="PTHR11550">
    <property type="entry name" value="CTP SYNTHASE"/>
    <property type="match status" value="1"/>
</dbReference>
<dbReference type="PANTHER" id="PTHR11550:SF0">
    <property type="entry name" value="CTP SYNTHASE-RELATED"/>
    <property type="match status" value="1"/>
</dbReference>
<dbReference type="Pfam" id="PF06418">
    <property type="entry name" value="CTP_synth_N"/>
    <property type="match status" value="1"/>
</dbReference>
<dbReference type="Pfam" id="PF00117">
    <property type="entry name" value="GATase"/>
    <property type="match status" value="1"/>
</dbReference>
<dbReference type="SUPFAM" id="SSF52317">
    <property type="entry name" value="Class I glutamine amidotransferase-like"/>
    <property type="match status" value="1"/>
</dbReference>
<dbReference type="SUPFAM" id="SSF52540">
    <property type="entry name" value="P-loop containing nucleoside triphosphate hydrolases"/>
    <property type="match status" value="1"/>
</dbReference>
<dbReference type="PROSITE" id="PS51273">
    <property type="entry name" value="GATASE_TYPE_1"/>
    <property type="match status" value="1"/>
</dbReference>
<sequence length="545" mass="60171">MATNYIFVTGGVVSSLGKGIAAASLASILEARGLNVTIMKLDPYINVDPGTMSPTQHGEVFVTQDGAETDLDLGHYERFIRSKMSKANNFTSGKIYSEVLRKERRGDYLGATIQVIPHITNEIKERVIEGGKGRDVVIVEVGGTVGDIESLPFLEALRQLAVDVGREKTLFMHLTLVPYIPTAGEVKTKPTQHSVKELLSIGIQPDVLICRSDRAIPSNERKKIALFCNVPERAVISLKDVDSIYRIPELLKSQGLDTFVCDRFRLDCPEADLSEWEQVLYRQANPTGEVTIGMVGKYVELPDAYKSVNEALKHAGLTNRLTVNIKYIDSQDIETKGVELLHGLDAILVPGGFGYRGVEGKIRTAQYARENKIPYLGICLGMQIALIEYARNVAGLTQANSSEFDKDCPQPVVGLITEWQDESGNVETRSDESDLGGTMRLGAQQCHLIEGTKAREVYGAETIVERHRHRYEVNNTLLPQIEAAGLKVSGLSADRKLVEIIEIPNHPWFIAAQFHPEFTSTPRDGHPLFAGFVKAAKDYQDSHKA</sequence>
<keyword id="KW-0067">ATP-binding</keyword>
<keyword id="KW-0315">Glutamine amidotransferase</keyword>
<keyword id="KW-0436">Ligase</keyword>
<keyword id="KW-0460">Magnesium</keyword>
<keyword id="KW-0479">Metal-binding</keyword>
<keyword id="KW-0547">Nucleotide-binding</keyword>
<keyword id="KW-0665">Pyrimidine biosynthesis</keyword>
<organism>
    <name type="scientific">Actinobacillus pleuropneumoniae serotype 7 (strain AP76)</name>
    <dbReference type="NCBI Taxonomy" id="537457"/>
    <lineage>
        <taxon>Bacteria</taxon>
        <taxon>Pseudomonadati</taxon>
        <taxon>Pseudomonadota</taxon>
        <taxon>Gammaproteobacteria</taxon>
        <taxon>Pasteurellales</taxon>
        <taxon>Pasteurellaceae</taxon>
        <taxon>Actinobacillus</taxon>
    </lineage>
</organism>
<accession>B3GZX8</accession>
<proteinExistence type="inferred from homology"/>
<feature type="chain" id="PRO_1000139367" description="CTP synthase">
    <location>
        <begin position="1"/>
        <end position="545"/>
    </location>
</feature>
<feature type="domain" description="Glutamine amidotransferase type-1" evidence="1">
    <location>
        <begin position="291"/>
        <end position="542"/>
    </location>
</feature>
<feature type="region of interest" description="Amidoligase domain" evidence="1">
    <location>
        <begin position="1"/>
        <end position="266"/>
    </location>
</feature>
<feature type="active site" description="Nucleophile; for glutamine hydrolysis" evidence="1">
    <location>
        <position position="379"/>
    </location>
</feature>
<feature type="active site" evidence="1">
    <location>
        <position position="515"/>
    </location>
</feature>
<feature type="active site" evidence="1">
    <location>
        <position position="517"/>
    </location>
</feature>
<feature type="binding site" evidence="1">
    <location>
        <position position="14"/>
    </location>
    <ligand>
        <name>CTP</name>
        <dbReference type="ChEBI" id="CHEBI:37563"/>
        <note>allosteric inhibitor</note>
    </ligand>
</feature>
<feature type="binding site" evidence="1">
    <location>
        <position position="14"/>
    </location>
    <ligand>
        <name>UTP</name>
        <dbReference type="ChEBI" id="CHEBI:46398"/>
    </ligand>
</feature>
<feature type="binding site" evidence="1">
    <location>
        <begin position="15"/>
        <end position="20"/>
    </location>
    <ligand>
        <name>ATP</name>
        <dbReference type="ChEBI" id="CHEBI:30616"/>
    </ligand>
</feature>
<feature type="binding site" evidence="1">
    <location>
        <position position="72"/>
    </location>
    <ligand>
        <name>ATP</name>
        <dbReference type="ChEBI" id="CHEBI:30616"/>
    </ligand>
</feature>
<feature type="binding site" evidence="1">
    <location>
        <position position="72"/>
    </location>
    <ligand>
        <name>Mg(2+)</name>
        <dbReference type="ChEBI" id="CHEBI:18420"/>
    </ligand>
</feature>
<feature type="binding site" evidence="1">
    <location>
        <position position="140"/>
    </location>
    <ligand>
        <name>Mg(2+)</name>
        <dbReference type="ChEBI" id="CHEBI:18420"/>
    </ligand>
</feature>
<feature type="binding site" evidence="1">
    <location>
        <begin position="147"/>
        <end position="149"/>
    </location>
    <ligand>
        <name>CTP</name>
        <dbReference type="ChEBI" id="CHEBI:37563"/>
        <note>allosteric inhibitor</note>
    </ligand>
</feature>
<feature type="binding site" evidence="1">
    <location>
        <begin position="187"/>
        <end position="192"/>
    </location>
    <ligand>
        <name>CTP</name>
        <dbReference type="ChEBI" id="CHEBI:37563"/>
        <note>allosteric inhibitor</note>
    </ligand>
</feature>
<feature type="binding site" evidence="1">
    <location>
        <begin position="187"/>
        <end position="192"/>
    </location>
    <ligand>
        <name>UTP</name>
        <dbReference type="ChEBI" id="CHEBI:46398"/>
    </ligand>
</feature>
<feature type="binding site" evidence="1">
    <location>
        <position position="223"/>
    </location>
    <ligand>
        <name>CTP</name>
        <dbReference type="ChEBI" id="CHEBI:37563"/>
        <note>allosteric inhibitor</note>
    </ligand>
</feature>
<feature type="binding site" evidence="1">
    <location>
        <position position="223"/>
    </location>
    <ligand>
        <name>UTP</name>
        <dbReference type="ChEBI" id="CHEBI:46398"/>
    </ligand>
</feature>
<feature type="binding site" evidence="1">
    <location>
        <begin position="239"/>
        <end position="241"/>
    </location>
    <ligand>
        <name>ATP</name>
        <dbReference type="ChEBI" id="CHEBI:30616"/>
    </ligand>
</feature>
<feature type="binding site" evidence="1">
    <location>
        <position position="352"/>
    </location>
    <ligand>
        <name>L-glutamine</name>
        <dbReference type="ChEBI" id="CHEBI:58359"/>
    </ligand>
</feature>
<feature type="binding site" evidence="1">
    <location>
        <begin position="380"/>
        <end position="383"/>
    </location>
    <ligand>
        <name>L-glutamine</name>
        <dbReference type="ChEBI" id="CHEBI:58359"/>
    </ligand>
</feature>
<feature type="binding site" evidence="1">
    <location>
        <position position="403"/>
    </location>
    <ligand>
        <name>L-glutamine</name>
        <dbReference type="ChEBI" id="CHEBI:58359"/>
    </ligand>
</feature>
<feature type="binding site" evidence="1">
    <location>
        <position position="470"/>
    </location>
    <ligand>
        <name>L-glutamine</name>
        <dbReference type="ChEBI" id="CHEBI:58359"/>
    </ligand>
</feature>
<evidence type="ECO:0000255" key="1">
    <source>
        <dbReference type="HAMAP-Rule" id="MF_01227"/>
    </source>
</evidence>
<gene>
    <name evidence="1" type="primary">pyrG</name>
    <name type="ordered locus">APP7_0138</name>
</gene>
<reference key="1">
    <citation type="submission" date="2008-06" db="EMBL/GenBank/DDBJ databases">
        <title>Genome and proteome analysis of A. pleuropneumoniae serotype 7.</title>
        <authorList>
            <person name="Linke B."/>
            <person name="Buettner F."/>
            <person name="Martinez-Arias R."/>
            <person name="Goesmann A."/>
            <person name="Baltes N."/>
            <person name="Tegetmeyer H."/>
            <person name="Singh M."/>
            <person name="Gerlach G.F."/>
        </authorList>
    </citation>
    <scope>NUCLEOTIDE SEQUENCE [LARGE SCALE GENOMIC DNA]</scope>
    <source>
        <strain>AP76</strain>
    </source>
</reference>